<evidence type="ECO:0000255" key="1">
    <source>
        <dbReference type="HAMAP-Rule" id="MF_01367"/>
    </source>
</evidence>
<evidence type="ECO:0000305" key="2"/>
<protein>
    <recommendedName>
        <fullName evidence="1">Large ribosomal subunit protein uL14</fullName>
    </recommendedName>
    <alternativeName>
        <fullName evidence="2">50S ribosomal protein L14</fullName>
    </alternativeName>
</protein>
<comment type="function">
    <text evidence="1">Binds to 23S rRNA. Forms part of two intersubunit bridges in the 70S ribosome.</text>
</comment>
<comment type="subunit">
    <text evidence="1">Part of the 50S ribosomal subunit. Forms a cluster with proteins L3 and L19. In the 70S ribosome, L14 and L19 interact and together make contacts with the 16S rRNA in bridges B5 and B8.</text>
</comment>
<comment type="similarity">
    <text evidence="1">Belongs to the universal ribosomal protein uL14 family.</text>
</comment>
<name>RL14_SHEDO</name>
<dbReference type="EMBL" id="CP000302">
    <property type="protein sequence ID" value="ABE53477.1"/>
    <property type="molecule type" value="Genomic_DNA"/>
</dbReference>
<dbReference type="RefSeq" id="WP_011494644.1">
    <property type="nucleotide sequence ID" value="NC_007954.1"/>
</dbReference>
<dbReference type="SMR" id="Q12SU9"/>
<dbReference type="STRING" id="318161.Sden_0180"/>
<dbReference type="GeneID" id="93807302"/>
<dbReference type="KEGG" id="sdn:Sden_0180"/>
<dbReference type="eggNOG" id="COG0093">
    <property type="taxonomic scope" value="Bacteria"/>
</dbReference>
<dbReference type="HOGENOM" id="CLU_095071_2_1_6"/>
<dbReference type="OrthoDB" id="9806379at2"/>
<dbReference type="Proteomes" id="UP000001982">
    <property type="component" value="Chromosome"/>
</dbReference>
<dbReference type="GO" id="GO:0022625">
    <property type="term" value="C:cytosolic large ribosomal subunit"/>
    <property type="evidence" value="ECO:0007669"/>
    <property type="project" value="TreeGrafter"/>
</dbReference>
<dbReference type="GO" id="GO:0070180">
    <property type="term" value="F:large ribosomal subunit rRNA binding"/>
    <property type="evidence" value="ECO:0007669"/>
    <property type="project" value="TreeGrafter"/>
</dbReference>
<dbReference type="GO" id="GO:0003735">
    <property type="term" value="F:structural constituent of ribosome"/>
    <property type="evidence" value="ECO:0007669"/>
    <property type="project" value="InterPro"/>
</dbReference>
<dbReference type="GO" id="GO:0006412">
    <property type="term" value="P:translation"/>
    <property type="evidence" value="ECO:0007669"/>
    <property type="project" value="UniProtKB-UniRule"/>
</dbReference>
<dbReference type="CDD" id="cd00337">
    <property type="entry name" value="Ribosomal_uL14"/>
    <property type="match status" value="1"/>
</dbReference>
<dbReference type="FunFam" id="2.40.150.20:FF:000001">
    <property type="entry name" value="50S ribosomal protein L14"/>
    <property type="match status" value="1"/>
</dbReference>
<dbReference type="Gene3D" id="2.40.150.20">
    <property type="entry name" value="Ribosomal protein L14"/>
    <property type="match status" value="1"/>
</dbReference>
<dbReference type="HAMAP" id="MF_01367">
    <property type="entry name" value="Ribosomal_uL14"/>
    <property type="match status" value="1"/>
</dbReference>
<dbReference type="InterPro" id="IPR000218">
    <property type="entry name" value="Ribosomal_uL14"/>
</dbReference>
<dbReference type="InterPro" id="IPR005745">
    <property type="entry name" value="Ribosomal_uL14_bac-type"/>
</dbReference>
<dbReference type="InterPro" id="IPR019972">
    <property type="entry name" value="Ribosomal_uL14_CS"/>
</dbReference>
<dbReference type="InterPro" id="IPR036853">
    <property type="entry name" value="Ribosomal_uL14_sf"/>
</dbReference>
<dbReference type="NCBIfam" id="TIGR01067">
    <property type="entry name" value="rplN_bact"/>
    <property type="match status" value="1"/>
</dbReference>
<dbReference type="PANTHER" id="PTHR11761">
    <property type="entry name" value="50S/60S RIBOSOMAL PROTEIN L14/L23"/>
    <property type="match status" value="1"/>
</dbReference>
<dbReference type="PANTHER" id="PTHR11761:SF3">
    <property type="entry name" value="LARGE RIBOSOMAL SUBUNIT PROTEIN UL14M"/>
    <property type="match status" value="1"/>
</dbReference>
<dbReference type="Pfam" id="PF00238">
    <property type="entry name" value="Ribosomal_L14"/>
    <property type="match status" value="1"/>
</dbReference>
<dbReference type="SMART" id="SM01374">
    <property type="entry name" value="Ribosomal_L14"/>
    <property type="match status" value="1"/>
</dbReference>
<dbReference type="SUPFAM" id="SSF50193">
    <property type="entry name" value="Ribosomal protein L14"/>
    <property type="match status" value="1"/>
</dbReference>
<dbReference type="PROSITE" id="PS00049">
    <property type="entry name" value="RIBOSOMAL_L14"/>
    <property type="match status" value="1"/>
</dbReference>
<proteinExistence type="inferred from homology"/>
<reference key="1">
    <citation type="submission" date="2006-03" db="EMBL/GenBank/DDBJ databases">
        <title>Complete sequence of Shewanella denitrificans OS217.</title>
        <authorList>
            <consortium name="US DOE Joint Genome Institute"/>
            <person name="Copeland A."/>
            <person name="Lucas S."/>
            <person name="Lapidus A."/>
            <person name="Barry K."/>
            <person name="Detter J.C."/>
            <person name="Glavina del Rio T."/>
            <person name="Hammon N."/>
            <person name="Israni S."/>
            <person name="Dalin E."/>
            <person name="Tice H."/>
            <person name="Pitluck S."/>
            <person name="Brettin T."/>
            <person name="Bruce D."/>
            <person name="Han C."/>
            <person name="Tapia R."/>
            <person name="Gilna P."/>
            <person name="Kiss H."/>
            <person name="Schmutz J."/>
            <person name="Larimer F."/>
            <person name="Land M."/>
            <person name="Hauser L."/>
            <person name="Kyrpides N."/>
            <person name="Lykidis A."/>
            <person name="Richardson P."/>
        </authorList>
    </citation>
    <scope>NUCLEOTIDE SEQUENCE [LARGE SCALE GENOMIC DNA]</scope>
    <source>
        <strain>OS217 / ATCC BAA-1090 / DSM 15013</strain>
    </source>
</reference>
<feature type="chain" id="PRO_0000266555" description="Large ribosomal subunit protein uL14">
    <location>
        <begin position="1"/>
        <end position="122"/>
    </location>
</feature>
<organism>
    <name type="scientific">Shewanella denitrificans (strain OS217 / ATCC BAA-1090 / DSM 15013)</name>
    <dbReference type="NCBI Taxonomy" id="318161"/>
    <lineage>
        <taxon>Bacteria</taxon>
        <taxon>Pseudomonadati</taxon>
        <taxon>Pseudomonadota</taxon>
        <taxon>Gammaproteobacteria</taxon>
        <taxon>Alteromonadales</taxon>
        <taxon>Shewanellaceae</taxon>
        <taxon>Shewanella</taxon>
    </lineage>
</organism>
<accession>Q12SU9</accession>
<gene>
    <name evidence="1" type="primary">rplN</name>
    <name type="ordered locus">Sden_0180</name>
</gene>
<keyword id="KW-1185">Reference proteome</keyword>
<keyword id="KW-0687">Ribonucleoprotein</keyword>
<keyword id="KW-0689">Ribosomal protein</keyword>
<keyword id="KW-0694">RNA-binding</keyword>
<keyword id="KW-0699">rRNA-binding</keyword>
<sequence>MIQMQSTLDVACNSGARRVQCIKVLGGSHRRYAGIGDIIKVSVKEAIPRAKAKKGDVYNAVVVRTKKGVRRPDGSVIRFDRNAAVLLNANLAPIGTRIFGPVTRELRTEQFMKIVSLAPEVL</sequence>